<accession>C6EVG7</accession>
<proteinExistence type="evidence at protein level"/>
<protein>
    <recommendedName>
        <fullName evidence="5">Natriuretic and helokinestatin peptides</fullName>
    </recommendedName>
    <component>
        <recommendedName>
            <fullName evidence="5">Helokinestatin-1</fullName>
            <shortName evidence="5">HKS-1</shortName>
        </recommendedName>
    </component>
    <component>
        <recommendedName>
            <fullName evidence="5">Helokinestatin-2</fullName>
            <shortName evidence="5">HKS-2</shortName>
        </recommendedName>
    </component>
    <component>
        <recommendedName>
            <fullName evidence="5">Helokinestatin-3</fullName>
            <shortName evidence="5">HKS-3</shortName>
        </recommendedName>
    </component>
    <component>
        <recommendedName>
            <fullName evidence="5">Helokinestatin-4</fullName>
            <shortName evidence="5">HKS-4</shortName>
        </recommendedName>
    </component>
    <component>
        <recommendedName>
            <fullName evidence="5">Natriuretic peptide</fullName>
        </recommendedName>
    </component>
</protein>
<sequence length="178" mass="19672">MNPRLACSTWLPLLLVLFTLDQGRANPVERGQEYRSLSKRFDDDSTELILEPRASEENGPPYQPLVPRASDENVPPAYVPLVPRASDENVPPPPLQMPLIPRASEQKGPPFNPPPFVDYEPRAANENALRKLIKRSFERSPGRNKRLSPGDGCFGQKIDRIGAVSGMGCNSVSSQGKK</sequence>
<reference evidence="6 7" key="1">
    <citation type="journal article" date="2010" name="Mol. Biol. Evol.">
        <title>Novel venom proteins produced by differential domain-expression strategies in beaded lizards and gila monsters (genus Heloderma).</title>
        <authorList>
            <person name="Fry B.G."/>
            <person name="Roelants K."/>
            <person name="Winter K."/>
            <person name="Hodgson W.C."/>
            <person name="Griesman L."/>
            <person name="Kwok H.F."/>
            <person name="Scanlon D."/>
            <person name="Karas J."/>
            <person name="Shaw C."/>
            <person name="Wong L."/>
            <person name="Norman J.A."/>
        </authorList>
    </citation>
    <scope>NUCLEOTIDE SEQUENCE [MRNA]</scope>
    <scope>PROTEIN SEQUENCE OF 59-68; 74-84; 90-102; 113-122 AND 147-178</scope>
    <scope>FUNCTION</scope>
    <scope>SUBCELLULAR LOCATION</scope>
    <scope>TISSUE SPECIFICITY</scope>
    <source>
        <tissue evidence="4">Venom</tissue>
        <tissue evidence="7">Venom gland</tissue>
    </source>
</reference>
<name>VNHP_HELSC</name>
<evidence type="ECO:0000250" key="1">
    <source>
        <dbReference type="UniProtKB" id="P83224"/>
    </source>
</evidence>
<evidence type="ECO:0000255" key="2"/>
<evidence type="ECO:0000256" key="3">
    <source>
        <dbReference type="SAM" id="MobiDB-lite"/>
    </source>
</evidence>
<evidence type="ECO:0000269" key="4">
    <source>
    </source>
</evidence>
<evidence type="ECO:0000303" key="5">
    <source>
    </source>
</evidence>
<evidence type="ECO:0000305" key="6"/>
<evidence type="ECO:0000312" key="7">
    <source>
        <dbReference type="EMBL" id="ACE95067.1"/>
    </source>
</evidence>
<keyword id="KW-1222">Bradykinin receptor impairing toxin</keyword>
<keyword id="KW-0165">Cleavage on pair of basic residues</keyword>
<keyword id="KW-0903">Direct protein sequencing</keyword>
<keyword id="KW-1015">Disulfide bond</keyword>
<keyword id="KW-1213">G-protein coupled receptor impairing toxin</keyword>
<keyword id="KW-0382">Hypotensive agent</keyword>
<keyword id="KW-0964">Secreted</keyword>
<keyword id="KW-0732">Signal</keyword>
<keyword id="KW-0800">Toxin</keyword>
<keyword id="KW-0838">Vasoactive</keyword>
<organism>
    <name type="scientific">Heloderma suspectum cinctum</name>
    <name type="common">Banded Gila monster</name>
    <dbReference type="NCBI Taxonomy" id="537493"/>
    <lineage>
        <taxon>Eukaryota</taxon>
        <taxon>Metazoa</taxon>
        <taxon>Chordata</taxon>
        <taxon>Craniata</taxon>
        <taxon>Vertebrata</taxon>
        <taxon>Euteleostomi</taxon>
        <taxon>Lepidosauria</taxon>
        <taxon>Squamata</taxon>
        <taxon>Bifurcata</taxon>
        <taxon>Unidentata</taxon>
        <taxon>Episquamata</taxon>
        <taxon>Toxicofera</taxon>
        <taxon>Anguimorpha</taxon>
        <taxon>Neoanguimorpha</taxon>
        <taxon>Helodermatidae</taxon>
        <taxon>Heloderma</taxon>
    </lineage>
</organism>
<feature type="signal peptide" evidence="2">
    <location>
        <begin position="1"/>
        <end position="25"/>
    </location>
</feature>
<feature type="propeptide" id="PRO_0000392454" evidence="4">
    <location>
        <begin position="26"/>
        <end position="58"/>
    </location>
</feature>
<feature type="peptide" id="PRO_0000392455" description="Helokinestatin-1" evidence="4">
    <location>
        <begin position="59"/>
        <end position="68"/>
    </location>
</feature>
<feature type="propeptide" id="PRO_0000392456" evidence="4">
    <location>
        <begin position="69"/>
        <end position="73"/>
    </location>
</feature>
<feature type="peptide" id="PRO_0000392457" description="Helokinestatin-2" evidence="4">
    <location>
        <begin position="74"/>
        <end position="84"/>
    </location>
</feature>
<feature type="propeptide" id="PRO_0000392458" evidence="4">
    <location>
        <begin position="85"/>
        <end position="89"/>
    </location>
</feature>
<feature type="peptide" id="PRO_0000392459" description="Helokinestatin-3" evidence="4">
    <location>
        <begin position="90"/>
        <end position="102"/>
    </location>
</feature>
<feature type="propeptide" id="PRO_0000392460" evidence="4">
    <location>
        <begin position="103"/>
        <end position="112"/>
    </location>
</feature>
<feature type="peptide" id="PRO_0000392461" description="Helokinestatin-4" evidence="4">
    <location>
        <begin position="113"/>
        <end position="122"/>
    </location>
</feature>
<feature type="propeptide" id="PRO_0000392462" evidence="4">
    <location>
        <begin position="123"/>
        <end position="146"/>
    </location>
</feature>
<feature type="peptide" id="PRO_0000392463" description="Natriuretic peptide" evidence="4">
    <location>
        <begin position="147"/>
        <end position="178"/>
    </location>
</feature>
<feature type="region of interest" description="Disordered" evidence="3">
    <location>
        <begin position="69"/>
        <end position="107"/>
    </location>
</feature>
<feature type="region of interest" description="Disordered" evidence="3">
    <location>
        <begin position="135"/>
        <end position="155"/>
    </location>
</feature>
<feature type="disulfide bond" evidence="1">
    <location>
        <begin position="153"/>
        <end position="169"/>
    </location>
</feature>
<comment type="function">
    <text evidence="4">Helokinestatins antagonize the vasodilatory actions of bradykinin at the B2 bradykinin receptor (BDKRB2), with helokinestatin-1 being the most potent antagonist.</text>
</comment>
<comment type="function">
    <molecule>Natriuretic peptide</molecule>
    <text evidence="4">exhibits hypotensive and vasodepressor activities, possibly by targeting natriuretic peptide receptors NPR1 and NPR2.</text>
</comment>
<comment type="subcellular location">
    <subcellularLocation>
        <location evidence="4">Secreted</location>
    </subcellularLocation>
</comment>
<comment type="tissue specificity">
    <text evidence="4">Expressed by the venom gland.</text>
</comment>
<comment type="similarity">
    <text evidence="2">In the C-terminal section; belongs to the natriuretic peptide family.</text>
</comment>
<dbReference type="EMBL" id="EU790965">
    <property type="protein sequence ID" value="ACE95067.1"/>
    <property type="molecule type" value="mRNA"/>
</dbReference>
<dbReference type="GO" id="GO:0005737">
    <property type="term" value="C:cytoplasm"/>
    <property type="evidence" value="ECO:0007669"/>
    <property type="project" value="TreeGrafter"/>
</dbReference>
<dbReference type="GO" id="GO:0005615">
    <property type="term" value="C:extracellular space"/>
    <property type="evidence" value="ECO:0007669"/>
    <property type="project" value="TreeGrafter"/>
</dbReference>
<dbReference type="GO" id="GO:0005179">
    <property type="term" value="F:hormone activity"/>
    <property type="evidence" value="ECO:0007669"/>
    <property type="project" value="InterPro"/>
</dbReference>
<dbReference type="GO" id="GO:0051427">
    <property type="term" value="F:hormone receptor binding"/>
    <property type="evidence" value="ECO:0007669"/>
    <property type="project" value="TreeGrafter"/>
</dbReference>
<dbReference type="GO" id="GO:0090729">
    <property type="term" value="F:toxin activity"/>
    <property type="evidence" value="ECO:0007669"/>
    <property type="project" value="UniProtKB-KW"/>
</dbReference>
<dbReference type="GO" id="GO:0097746">
    <property type="term" value="P:blood vessel diameter maintenance"/>
    <property type="evidence" value="ECO:0007669"/>
    <property type="project" value="UniProtKB-KW"/>
</dbReference>
<dbReference type="GO" id="GO:0006182">
    <property type="term" value="P:cGMP biosynthetic process"/>
    <property type="evidence" value="ECO:0007669"/>
    <property type="project" value="TreeGrafter"/>
</dbReference>
<dbReference type="GO" id="GO:0019934">
    <property type="term" value="P:cGMP-mediated signaling"/>
    <property type="evidence" value="ECO:0007669"/>
    <property type="project" value="TreeGrafter"/>
</dbReference>
<dbReference type="GO" id="GO:0003085">
    <property type="term" value="P:negative regulation of systemic arterial blood pressure"/>
    <property type="evidence" value="ECO:0007669"/>
    <property type="project" value="TreeGrafter"/>
</dbReference>
<dbReference type="GO" id="GO:0007218">
    <property type="term" value="P:neuropeptide signaling pathway"/>
    <property type="evidence" value="ECO:0007669"/>
    <property type="project" value="TreeGrafter"/>
</dbReference>
<dbReference type="GO" id="GO:0007168">
    <property type="term" value="P:receptor guanylyl cyclase signaling pathway"/>
    <property type="evidence" value="ECO:0007669"/>
    <property type="project" value="TreeGrafter"/>
</dbReference>
<dbReference type="InterPro" id="IPR000663">
    <property type="entry name" value="Natr_peptide"/>
</dbReference>
<dbReference type="InterPro" id="IPR030480">
    <property type="entry name" value="Natr_peptide_CS"/>
</dbReference>
<dbReference type="InterPro" id="IPR050787">
    <property type="entry name" value="Natriuretic_peptide"/>
</dbReference>
<dbReference type="InterPro" id="IPR002408">
    <property type="entry name" value="Natriuretic_peptide_brain"/>
</dbReference>
<dbReference type="PANTHER" id="PTHR14066">
    <property type="entry name" value="ATRIAL NATRIURETIC FACTOR PRECURSOR"/>
    <property type="match status" value="1"/>
</dbReference>
<dbReference type="PANTHER" id="PTHR14066:SF10">
    <property type="entry name" value="NATRIURETIC PEPTIDES B"/>
    <property type="match status" value="1"/>
</dbReference>
<dbReference type="Pfam" id="PF00212">
    <property type="entry name" value="ANP"/>
    <property type="match status" value="1"/>
</dbReference>
<dbReference type="PRINTS" id="PR00712">
    <property type="entry name" value="BNATPEPTIDE"/>
</dbReference>
<dbReference type="SMART" id="SM00183">
    <property type="entry name" value="NAT_PEP"/>
    <property type="match status" value="1"/>
</dbReference>
<dbReference type="PROSITE" id="PS00263">
    <property type="entry name" value="NATRIURETIC_PEPTIDE"/>
    <property type="match status" value="1"/>
</dbReference>